<proteinExistence type="evidence at transcript level"/>
<reference key="1">
    <citation type="journal article" date="2007" name="Gene">
        <title>Mapping of chimpanzee full-length cDNAs onto the human genome unveils large potential divergence of the transcriptome.</title>
        <authorList>
            <person name="Sakate R."/>
            <person name="Suto Y."/>
            <person name="Imanishi T."/>
            <person name="Tanoue T."/>
            <person name="Hida M."/>
            <person name="Hayasaka I."/>
            <person name="Kusuda J."/>
            <person name="Gojobori T."/>
            <person name="Hashimoto K."/>
            <person name="Hirai M."/>
        </authorList>
    </citation>
    <scope>NUCLEOTIDE SEQUENCE [MRNA]</scope>
    <source>
        <tissue>Cerebellum</tissue>
    </source>
</reference>
<comment type="function">
    <text evidence="2">Together with BCKDHB forms the heterotetrameric E1 subunit of the mitochondrial branched-chain alpha-ketoacid dehydrogenase (BCKD) complex. The BCKD complex catalyzes the multi-step oxidative decarboxylation of alpha-ketoacids derived from the branched-chain amino-acids valine, leucine and isoleucine producing CO2 and acyl-CoA which is subsequently utilized to produce energy. The E1 subunit catalyzes the first step with the decarboxylation of the alpha-ketoacid forming an enzyme-product intermediate. A reductive acylation mediated by the lipoylamide cofactor of E2 extracts the acyl group from the E1 active site for the next step of the reaction.</text>
</comment>
<comment type="catalytic activity">
    <reaction evidence="2">
        <text>N(6)-[(R)-lipoyl]-L-lysyl-[protein] + 3-methyl-2-oxobutanoate + H(+) = N(6)-[(R)-S(8)-2-methylpropanoyldihydrolipoyl]-L-lysyl-[protein] + CO2</text>
        <dbReference type="Rhea" id="RHEA:13457"/>
        <dbReference type="Rhea" id="RHEA-COMP:10474"/>
        <dbReference type="Rhea" id="RHEA-COMP:10497"/>
        <dbReference type="ChEBI" id="CHEBI:11851"/>
        <dbReference type="ChEBI" id="CHEBI:15378"/>
        <dbReference type="ChEBI" id="CHEBI:16526"/>
        <dbReference type="ChEBI" id="CHEBI:83099"/>
        <dbReference type="ChEBI" id="CHEBI:83142"/>
        <dbReference type="EC" id="1.2.4.4"/>
    </reaction>
    <physiologicalReaction direction="left-to-right" evidence="2">
        <dbReference type="Rhea" id="RHEA:13458"/>
    </physiologicalReaction>
</comment>
<comment type="cofactor">
    <cofactor evidence="2">
        <name>thiamine diphosphate</name>
        <dbReference type="ChEBI" id="CHEBI:58937"/>
    </cofactor>
    <cofactor evidence="2">
        <name>Mg(2+)</name>
        <dbReference type="ChEBI" id="CHEBI:18420"/>
    </cofactor>
</comment>
<comment type="subunit">
    <text evidence="2">Heterotetramer of 2 alpha/BCKDHA and 2 beta chains/BCKDHB that forms the branched-chain alpha-keto acid decarboxylase (E1) component of the BCKD complex. The branched-chain alpha-ketoacid dehydrogenase is a large complex composed of three major building blocks E1, E2 and E3. It is organized around E2, a 24-meric cubic core composed of DBT, to which are associated 6 to 12 copies of E1, and approximately 6 copies of the dehydrogenase E3, a DLD dimer. Interacts with PPM1K.</text>
</comment>
<comment type="subcellular location">
    <subcellularLocation>
        <location evidence="2">Mitochondrion matrix</location>
    </subcellularLocation>
</comment>
<comment type="PTM">
    <text evidence="2">Phosphorylated at Ser-337 by BCKDK and dephosphorylated by protein phosphatase PPM1K.</text>
</comment>
<comment type="similarity">
    <text evidence="5">Belongs to the BCKDHA family.</text>
</comment>
<keyword id="KW-0007">Acetylation</keyword>
<keyword id="KW-0460">Magnesium</keyword>
<keyword id="KW-0479">Metal-binding</keyword>
<keyword id="KW-0496">Mitochondrion</keyword>
<keyword id="KW-0560">Oxidoreductase</keyword>
<keyword id="KW-0597">Phosphoprotein</keyword>
<keyword id="KW-0630">Potassium</keyword>
<keyword id="KW-1185">Reference proteome</keyword>
<keyword id="KW-0786">Thiamine pyrophosphate</keyword>
<keyword id="KW-0809">Transit peptide</keyword>
<organism>
    <name type="scientific">Pan troglodytes</name>
    <name type="common">Chimpanzee</name>
    <dbReference type="NCBI Taxonomy" id="9598"/>
    <lineage>
        <taxon>Eukaryota</taxon>
        <taxon>Metazoa</taxon>
        <taxon>Chordata</taxon>
        <taxon>Craniata</taxon>
        <taxon>Vertebrata</taxon>
        <taxon>Euteleostomi</taxon>
        <taxon>Mammalia</taxon>
        <taxon>Eutheria</taxon>
        <taxon>Euarchontoglires</taxon>
        <taxon>Primates</taxon>
        <taxon>Haplorrhini</taxon>
        <taxon>Catarrhini</taxon>
        <taxon>Hominidae</taxon>
        <taxon>Pan</taxon>
    </lineage>
</organism>
<protein>
    <recommendedName>
        <fullName evidence="2">2-oxoisovalerate dehydrogenase subunit alpha, mitochondrial</fullName>
        <ecNumber evidence="2">1.2.4.4</ecNumber>
    </recommendedName>
    <alternativeName>
        <fullName>Branched-chain alpha-keto acid dehydrogenase E1 component alpha chain</fullName>
        <shortName>BCKDE1A</shortName>
        <shortName>BCKDH E1-alpha</shortName>
    </alternativeName>
</protein>
<gene>
    <name type="primary">BCKDHA</name>
</gene>
<feature type="transit peptide" description="Mitochondrion" evidence="1">
    <location>
        <begin position="1"/>
        <end position="45"/>
    </location>
</feature>
<feature type="chain" id="PRO_0000296643" description="2-oxoisovalerate dehydrogenase subunit alpha, mitochondrial">
    <location>
        <begin position="46"/>
        <end position="445"/>
    </location>
</feature>
<feature type="region of interest" description="Disordered" evidence="4">
    <location>
        <begin position="33"/>
        <end position="54"/>
    </location>
</feature>
<feature type="binding site" evidence="2">
    <location>
        <position position="158"/>
    </location>
    <ligand>
        <name>thiamine diphosphate</name>
        <dbReference type="ChEBI" id="CHEBI:58937"/>
        <note>ligand shared with beta subunit</note>
    </ligand>
</feature>
<feature type="binding site" evidence="2">
    <location>
        <position position="159"/>
    </location>
    <ligand>
        <name>thiamine diphosphate</name>
        <dbReference type="ChEBI" id="CHEBI:58937"/>
        <note>ligand shared with beta subunit</note>
    </ligand>
</feature>
<feature type="binding site" evidence="2">
    <location>
        <position position="206"/>
    </location>
    <ligand>
        <name>K(+)</name>
        <dbReference type="ChEBI" id="CHEBI:29103"/>
        <note>structural</note>
    </ligand>
</feature>
<feature type="binding site" evidence="2">
    <location>
        <position position="207"/>
    </location>
    <ligand>
        <name>thiamine diphosphate</name>
        <dbReference type="ChEBI" id="CHEBI:58937"/>
        <note>ligand shared with beta subunit</note>
    </ligand>
</feature>
<feature type="binding site" evidence="2">
    <location>
        <position position="208"/>
    </location>
    <ligand>
        <name>K(+)</name>
        <dbReference type="ChEBI" id="CHEBI:29103"/>
        <note>structural</note>
    </ligand>
</feature>
<feature type="binding site" evidence="2">
    <location>
        <position position="211"/>
    </location>
    <ligand>
        <name>K(+)</name>
        <dbReference type="ChEBI" id="CHEBI:29103"/>
        <note>structural</note>
    </ligand>
</feature>
<feature type="binding site" evidence="2">
    <location>
        <position position="212"/>
    </location>
    <ligand>
        <name>K(+)</name>
        <dbReference type="ChEBI" id="CHEBI:29103"/>
        <note>structural</note>
    </ligand>
</feature>
<feature type="binding site" evidence="2">
    <location>
        <position position="238"/>
    </location>
    <ligand>
        <name>Mg(2+)</name>
        <dbReference type="ChEBI" id="CHEBI:18420"/>
    </ligand>
</feature>
<feature type="binding site" evidence="2">
    <location>
        <position position="239"/>
    </location>
    <ligand>
        <name>thiamine diphosphate</name>
        <dbReference type="ChEBI" id="CHEBI:58937"/>
        <note>ligand shared with beta subunit</note>
    </ligand>
</feature>
<feature type="binding site" evidence="2">
    <location>
        <position position="240"/>
    </location>
    <ligand>
        <name>thiamine diphosphate</name>
        <dbReference type="ChEBI" id="CHEBI:58937"/>
        <note>ligand shared with beta subunit</note>
    </ligand>
</feature>
<feature type="binding site" evidence="2">
    <location>
        <position position="265"/>
    </location>
    <ligand>
        <name>thiamine diphosphate</name>
        <dbReference type="ChEBI" id="CHEBI:58937"/>
        <note>ligand shared with beta subunit</note>
    </ligand>
</feature>
<feature type="binding site" evidence="2">
    <location>
        <position position="267"/>
    </location>
    <ligand>
        <name>Mg(2+)</name>
        <dbReference type="ChEBI" id="CHEBI:18420"/>
    </ligand>
</feature>
<feature type="binding site" evidence="2">
    <location>
        <position position="269"/>
    </location>
    <ligand>
        <name>Mg(2+)</name>
        <dbReference type="ChEBI" id="CHEBI:18420"/>
    </ligand>
</feature>
<feature type="binding site" evidence="2">
    <location>
        <position position="336"/>
    </location>
    <ligand>
        <name>thiamine diphosphate</name>
        <dbReference type="ChEBI" id="CHEBI:58937"/>
        <note>ligand shared with beta subunit</note>
    </ligand>
</feature>
<feature type="modified residue" description="Phosphoserine; by BCKDK" evidence="3">
    <location>
        <position position="337"/>
    </location>
</feature>
<feature type="modified residue" description="Phosphothreonine" evidence="3">
    <location>
        <position position="338"/>
    </location>
</feature>
<feature type="modified residue" description="Phosphoserine" evidence="3">
    <location>
        <position position="339"/>
    </location>
</feature>
<feature type="modified residue" description="Phosphoserine" evidence="3">
    <location>
        <position position="347"/>
    </location>
</feature>
<feature type="modified residue" description="N6-acetyllysine; alternate" evidence="3">
    <location>
        <position position="356"/>
    </location>
</feature>
<feature type="modified residue" description="N6-succinyllysine; alternate" evidence="3">
    <location>
        <position position="356"/>
    </location>
</feature>
<feature type="modified residue" description="N6-succinyllysine" evidence="3">
    <location>
        <position position="380"/>
    </location>
</feature>
<accession>A5A6H9</accession>
<sequence length="445" mass="50516">MAVAIAAARVWRLNRGLSQAALLLLRRPGARGLARSHPRRQQQQFSSLDDKPQFPGASAEFIDKLEFIQPNVISGIPIYRVMDRQGQIINPSEDPHLPKEKVLKLYKSMTLLNTMDRILYESQRQGRISFYMTNYGEEGTHVGSAAALDNTDLVFGQYREAGVLMYRDYPLELFMAQCYGNISDLGKGRQMPVHYGCKERHFVTISSPLATQIPQAVGAAYAAKRANANRVVICYFGEGAASEGDAHAGFNFAATLECPIIFFCRNNGYAISTPTSEQYRGDGIAARGPGYGIMSIRVDGNDVFAVYNATKEARRRAVAENQPFLIEAMTYRIGHHSTSDDSSAYRSVDEVNYWDKQDHPVSRLRHYLLSQGWWDEEQEKAWRKQSRKKVMEAFEQAERKPKPNPNLLFSDVYQEMPAQLRKQQESLARHLQTYGEHYPLDHFDK</sequence>
<name>ODBA_PANTR</name>
<dbReference type="EC" id="1.2.4.4" evidence="2"/>
<dbReference type="EMBL" id="AB222107">
    <property type="protein sequence ID" value="BAF62352.1"/>
    <property type="molecule type" value="mRNA"/>
</dbReference>
<dbReference type="RefSeq" id="NP_001092034.1">
    <property type="nucleotide sequence ID" value="NM_001098564.1"/>
</dbReference>
<dbReference type="SMR" id="A5A6H9"/>
<dbReference type="FunCoup" id="A5A6H9">
    <property type="interactions" value="1108"/>
</dbReference>
<dbReference type="STRING" id="9598.ENSPTRP00000018933"/>
<dbReference type="PaxDb" id="9598-ENSPTRP00000018933"/>
<dbReference type="GeneID" id="468889"/>
<dbReference type="KEGG" id="ptr:468889"/>
<dbReference type="CTD" id="593"/>
<dbReference type="eggNOG" id="KOG1182">
    <property type="taxonomic scope" value="Eukaryota"/>
</dbReference>
<dbReference type="InParanoid" id="A5A6H9"/>
<dbReference type="OrthoDB" id="9485at9604"/>
<dbReference type="Proteomes" id="UP000002277">
    <property type="component" value="Unplaced"/>
</dbReference>
<dbReference type="GO" id="GO:0160157">
    <property type="term" value="C:branched-chain alpha-ketoacid dehydrogenase complex"/>
    <property type="evidence" value="ECO:0000250"/>
    <property type="project" value="UniProtKB"/>
</dbReference>
<dbReference type="GO" id="GO:0005759">
    <property type="term" value="C:mitochondrial matrix"/>
    <property type="evidence" value="ECO:0007669"/>
    <property type="project" value="UniProtKB-SubCell"/>
</dbReference>
<dbReference type="GO" id="GO:0003863">
    <property type="term" value="F:3-methyl-2-oxobutanoate dehydrogenase (2-methylpropanoyl-transferring) activity"/>
    <property type="evidence" value="ECO:0007669"/>
    <property type="project" value="UniProtKB-EC"/>
</dbReference>
<dbReference type="GO" id="GO:0046872">
    <property type="term" value="F:metal ion binding"/>
    <property type="evidence" value="ECO:0007669"/>
    <property type="project" value="UniProtKB-KW"/>
</dbReference>
<dbReference type="GO" id="GO:0009083">
    <property type="term" value="P:branched-chain amino acid catabolic process"/>
    <property type="evidence" value="ECO:0000250"/>
    <property type="project" value="UniProtKB"/>
</dbReference>
<dbReference type="CDD" id="cd02000">
    <property type="entry name" value="TPP_E1_PDC_ADC_BCADC"/>
    <property type="match status" value="1"/>
</dbReference>
<dbReference type="FunFam" id="3.40.50.970:FF:000015">
    <property type="entry name" value="2-oxoisovalerate dehydrogenase subunit alpha"/>
    <property type="match status" value="1"/>
</dbReference>
<dbReference type="Gene3D" id="3.40.50.970">
    <property type="match status" value="1"/>
</dbReference>
<dbReference type="InterPro" id="IPR050771">
    <property type="entry name" value="Alpha-ketoacid_DH_E1_comp"/>
</dbReference>
<dbReference type="InterPro" id="IPR001017">
    <property type="entry name" value="DH_E1"/>
</dbReference>
<dbReference type="InterPro" id="IPR029061">
    <property type="entry name" value="THDP-binding"/>
</dbReference>
<dbReference type="PANTHER" id="PTHR43380">
    <property type="entry name" value="2-OXOISOVALERATE DEHYDROGENASE SUBUNIT ALPHA, MITOCHONDRIAL"/>
    <property type="match status" value="1"/>
</dbReference>
<dbReference type="PANTHER" id="PTHR43380:SF1">
    <property type="entry name" value="2-OXOISOVALERATE DEHYDROGENASE SUBUNIT ALPHA, MITOCHONDRIAL"/>
    <property type="match status" value="1"/>
</dbReference>
<dbReference type="Pfam" id="PF00676">
    <property type="entry name" value="E1_dh"/>
    <property type="match status" value="1"/>
</dbReference>
<dbReference type="SUPFAM" id="SSF52518">
    <property type="entry name" value="Thiamin diphosphate-binding fold (THDP-binding)"/>
    <property type="match status" value="1"/>
</dbReference>
<evidence type="ECO:0000250" key="1"/>
<evidence type="ECO:0000250" key="2">
    <source>
        <dbReference type="UniProtKB" id="P12694"/>
    </source>
</evidence>
<evidence type="ECO:0000250" key="3">
    <source>
        <dbReference type="UniProtKB" id="P50136"/>
    </source>
</evidence>
<evidence type="ECO:0000256" key="4">
    <source>
        <dbReference type="SAM" id="MobiDB-lite"/>
    </source>
</evidence>
<evidence type="ECO:0000305" key="5"/>